<keyword id="KW-0460">Magnesium</keyword>
<keyword id="KW-0479">Metal-binding</keyword>
<keyword id="KW-1185">Reference proteome</keyword>
<keyword id="KW-0808">Transferase</keyword>
<gene>
    <name evidence="1" type="primary">uppS</name>
    <name type="ordered locus">TDE_2344</name>
</gene>
<reference key="1">
    <citation type="journal article" date="2004" name="Proc. Natl. Acad. Sci. U.S.A.">
        <title>Comparison of the genome of the oral pathogen Treponema denticola with other spirochete genomes.</title>
        <authorList>
            <person name="Seshadri R."/>
            <person name="Myers G.S.A."/>
            <person name="Tettelin H."/>
            <person name="Eisen J.A."/>
            <person name="Heidelberg J.F."/>
            <person name="Dodson R.J."/>
            <person name="Davidsen T.M."/>
            <person name="DeBoy R.T."/>
            <person name="Fouts D.E."/>
            <person name="Haft D.H."/>
            <person name="Selengut J."/>
            <person name="Ren Q."/>
            <person name="Brinkac L.M."/>
            <person name="Madupu R."/>
            <person name="Kolonay J.F."/>
            <person name="Durkin S.A."/>
            <person name="Daugherty S.C."/>
            <person name="Shetty J."/>
            <person name="Shvartsbeyn A."/>
            <person name="Gebregeorgis E."/>
            <person name="Geer K."/>
            <person name="Tsegaye G."/>
            <person name="Malek J.A."/>
            <person name="Ayodeji B."/>
            <person name="Shatsman S."/>
            <person name="McLeod M.P."/>
            <person name="Smajs D."/>
            <person name="Howell J.K."/>
            <person name="Pal S."/>
            <person name="Amin A."/>
            <person name="Vashisth P."/>
            <person name="McNeill T.Z."/>
            <person name="Xiang Q."/>
            <person name="Sodergren E."/>
            <person name="Baca E."/>
            <person name="Weinstock G.M."/>
            <person name="Norris S.J."/>
            <person name="Fraser C.M."/>
            <person name="Paulsen I.T."/>
        </authorList>
    </citation>
    <scope>NUCLEOTIDE SEQUENCE [LARGE SCALE GENOMIC DNA]</scope>
    <source>
        <strain>ATCC 35405 / DSM 14222 / CIP 103919 / JCM 8153 / KCTC 15104</strain>
    </source>
</reference>
<proteinExistence type="inferred from homology"/>
<accession>Q73K76</accession>
<protein>
    <recommendedName>
        <fullName evidence="1">Isoprenyl transferase</fullName>
        <ecNumber evidence="1">2.5.1.-</ecNumber>
    </recommendedName>
</protein>
<evidence type="ECO:0000255" key="1">
    <source>
        <dbReference type="HAMAP-Rule" id="MF_01139"/>
    </source>
</evidence>
<comment type="function">
    <text evidence="1">Catalyzes the condensation of isopentenyl diphosphate (IPP) with allylic pyrophosphates generating different type of terpenoids.</text>
</comment>
<comment type="cofactor">
    <cofactor evidence="1">
        <name>Mg(2+)</name>
        <dbReference type="ChEBI" id="CHEBI:18420"/>
    </cofactor>
    <text evidence="1">Binds 2 magnesium ions per subunit.</text>
</comment>
<comment type="subunit">
    <text evidence="1">Homodimer.</text>
</comment>
<comment type="similarity">
    <text evidence="1">Belongs to the UPP synthase family.</text>
</comment>
<feature type="chain" id="PRO_0000123705" description="Isoprenyl transferase">
    <location>
        <begin position="1"/>
        <end position="227"/>
    </location>
</feature>
<feature type="active site" evidence="1">
    <location>
        <position position="13"/>
    </location>
</feature>
<feature type="active site" description="Proton acceptor" evidence="1">
    <location>
        <position position="61"/>
    </location>
</feature>
<feature type="binding site" evidence="1">
    <location>
        <position position="13"/>
    </location>
    <ligand>
        <name>Mg(2+)</name>
        <dbReference type="ChEBI" id="CHEBI:18420"/>
    </ligand>
</feature>
<feature type="binding site" evidence="1">
    <location>
        <begin position="14"/>
        <end position="17"/>
    </location>
    <ligand>
        <name>substrate</name>
    </ligand>
</feature>
<feature type="binding site" evidence="1">
    <location>
        <position position="18"/>
    </location>
    <ligand>
        <name>substrate</name>
    </ligand>
</feature>
<feature type="binding site" evidence="1">
    <location>
        <position position="26"/>
    </location>
    <ligand>
        <name>substrate</name>
    </ligand>
</feature>
<feature type="binding site" evidence="1">
    <location>
        <position position="30"/>
    </location>
    <ligand>
        <name>substrate</name>
    </ligand>
</feature>
<feature type="binding site" evidence="1">
    <location>
        <begin position="58"/>
        <end position="60"/>
    </location>
    <ligand>
        <name>substrate</name>
    </ligand>
</feature>
<feature type="binding site" evidence="1">
    <location>
        <position position="62"/>
    </location>
    <ligand>
        <name>substrate</name>
    </ligand>
</feature>
<feature type="binding site" evidence="1">
    <location>
        <position position="64"/>
    </location>
    <ligand>
        <name>substrate</name>
    </ligand>
</feature>
<feature type="binding site" evidence="1">
    <location>
        <position position="175"/>
    </location>
    <ligand>
        <name>substrate</name>
    </ligand>
</feature>
<feature type="binding site" evidence="1">
    <location>
        <begin position="181"/>
        <end position="183"/>
    </location>
    <ligand>
        <name>substrate</name>
    </ligand>
</feature>
<feature type="binding site" evidence="1">
    <location>
        <position position="194"/>
    </location>
    <ligand>
        <name>Mg(2+)</name>
        <dbReference type="ChEBI" id="CHEBI:18420"/>
    </ligand>
</feature>
<sequence length="227" mass="25879">MSDELKHIAIVMDGNGRWAKKRGLPRSMGHKEGLNTVKRITKAVSDLGIPYITLYIFSTENWKRTEAEVGFLMGLIKQHLKAELKFYADNNIRIEHIGNLSGLPQDIQDEINSVRDKTSAYTGTAIVLGINYGAHDEILRAIKKLNSDELASINEESFSLKLDTGKIPPVDLLIRTGGEKRLSNFLLWQSAYAELYFTDTLWPDWTVENLYEAIEDYKKRNRRYGNA</sequence>
<organism>
    <name type="scientific">Treponema denticola (strain ATCC 35405 / DSM 14222 / CIP 103919 / JCM 8153 / KCTC 15104)</name>
    <dbReference type="NCBI Taxonomy" id="243275"/>
    <lineage>
        <taxon>Bacteria</taxon>
        <taxon>Pseudomonadati</taxon>
        <taxon>Spirochaetota</taxon>
        <taxon>Spirochaetia</taxon>
        <taxon>Spirochaetales</taxon>
        <taxon>Treponemataceae</taxon>
        <taxon>Treponema</taxon>
    </lineage>
</organism>
<dbReference type="EC" id="2.5.1.-" evidence="1"/>
<dbReference type="EMBL" id="AE017226">
    <property type="protein sequence ID" value="AAS12862.1"/>
    <property type="molecule type" value="Genomic_DNA"/>
</dbReference>
<dbReference type="RefSeq" id="NP_972943.1">
    <property type="nucleotide sequence ID" value="NC_002967.9"/>
</dbReference>
<dbReference type="RefSeq" id="WP_002675801.1">
    <property type="nucleotide sequence ID" value="NC_002967.9"/>
</dbReference>
<dbReference type="SMR" id="Q73K76"/>
<dbReference type="STRING" id="243275.TDE_2344"/>
<dbReference type="PaxDb" id="243275-TDE_2344"/>
<dbReference type="GeneID" id="2739439"/>
<dbReference type="KEGG" id="tde:TDE_2344"/>
<dbReference type="PATRIC" id="fig|243275.7.peg.2212"/>
<dbReference type="eggNOG" id="COG0020">
    <property type="taxonomic scope" value="Bacteria"/>
</dbReference>
<dbReference type="HOGENOM" id="CLU_038505_1_1_12"/>
<dbReference type="OrthoDB" id="4191603at2"/>
<dbReference type="Proteomes" id="UP000008212">
    <property type="component" value="Chromosome"/>
</dbReference>
<dbReference type="GO" id="GO:0045547">
    <property type="term" value="F:ditrans,polycis-polyprenyl diphosphate synthase [(2E,6E)-farnesyl diphosphate specific] activity"/>
    <property type="evidence" value="ECO:0007669"/>
    <property type="project" value="TreeGrafter"/>
</dbReference>
<dbReference type="GO" id="GO:0000287">
    <property type="term" value="F:magnesium ion binding"/>
    <property type="evidence" value="ECO:0007669"/>
    <property type="project" value="UniProtKB-UniRule"/>
</dbReference>
<dbReference type="GO" id="GO:0016094">
    <property type="term" value="P:polyprenol biosynthetic process"/>
    <property type="evidence" value="ECO:0007669"/>
    <property type="project" value="TreeGrafter"/>
</dbReference>
<dbReference type="CDD" id="cd00475">
    <property type="entry name" value="Cis_IPPS"/>
    <property type="match status" value="1"/>
</dbReference>
<dbReference type="FunFam" id="3.40.1180.10:FF:000001">
    <property type="entry name" value="(2E,6E)-farnesyl-diphosphate-specific ditrans,polycis-undecaprenyl-diphosphate synthase"/>
    <property type="match status" value="1"/>
</dbReference>
<dbReference type="Gene3D" id="3.40.1180.10">
    <property type="entry name" value="Decaprenyl diphosphate synthase-like"/>
    <property type="match status" value="1"/>
</dbReference>
<dbReference type="HAMAP" id="MF_01139">
    <property type="entry name" value="ISPT"/>
    <property type="match status" value="1"/>
</dbReference>
<dbReference type="InterPro" id="IPR001441">
    <property type="entry name" value="UPP_synth-like"/>
</dbReference>
<dbReference type="InterPro" id="IPR018520">
    <property type="entry name" value="UPP_synth-like_CS"/>
</dbReference>
<dbReference type="InterPro" id="IPR036424">
    <property type="entry name" value="UPP_synth-like_sf"/>
</dbReference>
<dbReference type="NCBIfam" id="TIGR00055">
    <property type="entry name" value="uppS"/>
    <property type="match status" value="1"/>
</dbReference>
<dbReference type="PANTHER" id="PTHR10291:SF0">
    <property type="entry name" value="DEHYDRODOLICHYL DIPHOSPHATE SYNTHASE 2"/>
    <property type="match status" value="1"/>
</dbReference>
<dbReference type="PANTHER" id="PTHR10291">
    <property type="entry name" value="DEHYDRODOLICHYL DIPHOSPHATE SYNTHASE FAMILY MEMBER"/>
    <property type="match status" value="1"/>
</dbReference>
<dbReference type="Pfam" id="PF01255">
    <property type="entry name" value="Prenyltransf"/>
    <property type="match status" value="1"/>
</dbReference>
<dbReference type="SUPFAM" id="SSF64005">
    <property type="entry name" value="Undecaprenyl diphosphate synthase"/>
    <property type="match status" value="1"/>
</dbReference>
<dbReference type="PROSITE" id="PS01066">
    <property type="entry name" value="UPP_SYNTHASE"/>
    <property type="match status" value="1"/>
</dbReference>
<name>ISPT_TREDE</name>